<protein>
    <recommendedName>
        <fullName>General negative regulator of transcription subunit 3</fullName>
    </recommendedName>
</protein>
<organism>
    <name type="scientific">Saccharomyces cerevisiae (strain ATCC 204508 / S288c)</name>
    <name type="common">Baker's yeast</name>
    <dbReference type="NCBI Taxonomy" id="559292"/>
    <lineage>
        <taxon>Eukaryota</taxon>
        <taxon>Fungi</taxon>
        <taxon>Dikarya</taxon>
        <taxon>Ascomycota</taxon>
        <taxon>Saccharomycotina</taxon>
        <taxon>Saccharomycetes</taxon>
        <taxon>Saccharomycetales</taxon>
        <taxon>Saccharomycetaceae</taxon>
        <taxon>Saccharomyces</taxon>
    </lineage>
</organism>
<keyword id="KW-0010">Activator</keyword>
<keyword id="KW-0175">Coiled coil</keyword>
<keyword id="KW-0963">Cytoplasm</keyword>
<keyword id="KW-1017">Isopeptide bond</keyword>
<keyword id="KW-0539">Nucleus</keyword>
<keyword id="KW-0597">Phosphoprotein</keyword>
<keyword id="KW-1185">Reference proteome</keyword>
<keyword id="KW-0678">Repressor</keyword>
<keyword id="KW-0804">Transcription</keyword>
<keyword id="KW-0805">Transcription regulation</keyword>
<keyword id="KW-0832">Ubl conjugation</keyword>
<proteinExistence type="evidence at protein level"/>
<name>NOT3_YEAST</name>
<gene>
    <name type="primary">NOT3</name>
    <name type="ordered locus">YIL038C</name>
</gene>
<comment type="function">
    <text evidence="5">Acts as a component of the CCR4-NOT core complex, which in the nucleus seems to be a general transcription factor, and in the cytoplasm the major mRNA deadenylase involved in mRNA turnover. The NOT protein subcomplex negatively regulates the basal and activated transcription of many genes. Preferentially affects TC-type TATA element-dependent transcription. Could directly or indirectly inhibit component(s) of the general transcription machinery.</text>
</comment>
<comment type="subunit">
    <text evidence="3 5">Forms a NOT protein complex that comprises NOT1, NOT2, NOT3, NOT4 and NOT5. Subunit of the 1.0 MDa CCR4-NOT core complex that contains CCR4, CAF1, NOT1, NOT2, NOT3, NOT4, NOT5, CAF40 and CAF130. The core complex probably is part of a less characterized 1.9 MDa CCR4-NOT complex.</text>
</comment>
<comment type="interaction">
    <interactant intactId="EBI-12165">
        <id>P06102</id>
    </interactant>
    <interactant intactId="EBI-28306">
        <id>P53829</id>
        <label>CAF40</label>
    </interactant>
    <organismsDiffer>false</organismsDiffer>
    <experiments>3</experiments>
</comment>
<comment type="interaction">
    <interactant intactId="EBI-12165">
        <id>P06102</id>
    </interactant>
    <interactant intactId="EBI-12153">
        <id>P06100</id>
        <label>CDC36</label>
    </interactant>
    <organismsDiffer>false</organismsDiffer>
    <experiments>3</experiments>
</comment>
<comment type="interaction">
    <interactant intactId="EBI-12165">
        <id>P06102</id>
    </interactant>
    <interactant intactId="EBI-12139">
        <id>P25655</id>
        <label>CDC39</label>
    </interactant>
    <organismsDiffer>false</organismsDiffer>
    <experiments>4</experiments>
</comment>
<comment type="subcellular location">
    <subcellularLocation>
        <location evidence="6">Cytoplasm</location>
    </subcellularLocation>
    <subcellularLocation>
        <location>Nucleus</location>
    </subcellularLocation>
</comment>
<comment type="miscellaneous">
    <text evidence="4">Present with 2490 molecules/cell in log phase SD medium.</text>
</comment>
<comment type="similarity">
    <text evidence="6">Belongs to the CNOT2/3/5 family.</text>
</comment>
<comment type="caution">
    <text evidence="7">Was originally thought to be CDC39 (which is in fact NOT1).</text>
</comment>
<evidence type="ECO:0000255" key="1"/>
<evidence type="ECO:0000256" key="2">
    <source>
        <dbReference type="SAM" id="MobiDB-lite"/>
    </source>
</evidence>
<evidence type="ECO:0000269" key="3">
    <source>
    </source>
</evidence>
<evidence type="ECO:0000269" key="4">
    <source>
    </source>
</evidence>
<evidence type="ECO:0000269" key="5">
    <source>
    </source>
</evidence>
<evidence type="ECO:0000305" key="6"/>
<evidence type="ECO:0000305" key="7">
    <source>
    </source>
</evidence>
<evidence type="ECO:0007744" key="8">
    <source>
    </source>
</evidence>
<evidence type="ECO:0007744" key="9">
    <source>
    </source>
</evidence>
<evidence type="ECO:0007744" key="10">
    <source>
    </source>
</evidence>
<evidence type="ECO:0007744" key="11">
    <source>
    </source>
</evidence>
<evidence type="ECO:0007744" key="12">
    <source>
    </source>
</evidence>
<reference key="1">
    <citation type="journal article" date="1986" name="Nucleic Acids Res.">
        <title>Nucleotide sequence of the yeast cell division cycle start genes CDC28, CDC36, CDC37, and CDC39, and a structural analysis of the predicted products.</title>
        <authorList>
            <person name="Ferguson J."/>
            <person name="Ho J.-Y."/>
            <person name="Peterson T.A."/>
            <person name="Reed S.I."/>
        </authorList>
    </citation>
    <scope>NUCLEOTIDE SEQUENCE [GENOMIC DNA]</scope>
</reference>
<reference key="2">
    <citation type="journal article" date="1997" name="Nature">
        <title>The nucleotide sequence of Saccharomyces cerevisiae chromosome IX.</title>
        <authorList>
            <person name="Churcher C.M."/>
            <person name="Bowman S."/>
            <person name="Badcock K."/>
            <person name="Bankier A.T."/>
            <person name="Brown D."/>
            <person name="Chillingworth T."/>
            <person name="Connor R."/>
            <person name="Devlin K."/>
            <person name="Gentles S."/>
            <person name="Hamlin N."/>
            <person name="Harris D.E."/>
            <person name="Horsnell T."/>
            <person name="Hunt S."/>
            <person name="Jagels K."/>
            <person name="Jones M."/>
            <person name="Lye G."/>
            <person name="Moule S."/>
            <person name="Odell C."/>
            <person name="Pearson D."/>
            <person name="Rajandream M.A."/>
            <person name="Rice P."/>
            <person name="Rowley N."/>
            <person name="Skelton J."/>
            <person name="Smith V."/>
            <person name="Walsh S.V."/>
            <person name="Whitehead S."/>
            <person name="Barrell B.G."/>
        </authorList>
    </citation>
    <scope>NUCLEOTIDE SEQUENCE [LARGE SCALE GENOMIC DNA]</scope>
    <source>
        <strain>ATCC 204508 / S288c</strain>
    </source>
</reference>
<reference key="3">
    <citation type="journal article" date="2014" name="G3 (Bethesda)">
        <title>The reference genome sequence of Saccharomyces cerevisiae: Then and now.</title>
        <authorList>
            <person name="Engel S.R."/>
            <person name="Dietrich F.S."/>
            <person name="Fisk D.G."/>
            <person name="Binkley G."/>
            <person name="Balakrishnan R."/>
            <person name="Costanzo M.C."/>
            <person name="Dwight S.S."/>
            <person name="Hitz B.C."/>
            <person name="Karra K."/>
            <person name="Nash R.S."/>
            <person name="Weng S."/>
            <person name="Wong E.D."/>
            <person name="Lloyd P."/>
            <person name="Skrzypek M.S."/>
            <person name="Miyasato S.R."/>
            <person name="Simison M."/>
            <person name="Cherry J.M."/>
        </authorList>
    </citation>
    <scope>GENOME REANNOTATION</scope>
    <source>
        <strain>ATCC 204508 / S288c</strain>
    </source>
</reference>
<reference key="4">
    <citation type="journal article" date="2007" name="Genome Res.">
        <title>Approaching a complete repository of sequence-verified protein-encoding clones for Saccharomyces cerevisiae.</title>
        <authorList>
            <person name="Hu Y."/>
            <person name="Rolfs A."/>
            <person name="Bhullar B."/>
            <person name="Murthy T.V.S."/>
            <person name="Zhu C."/>
            <person name="Berger M.F."/>
            <person name="Camargo A.A."/>
            <person name="Kelley F."/>
            <person name="McCarron S."/>
            <person name="Jepson D."/>
            <person name="Richardson A."/>
            <person name="Raphael J."/>
            <person name="Moreira D."/>
            <person name="Taycher E."/>
            <person name="Zuo D."/>
            <person name="Mohr S."/>
            <person name="Kane M.F."/>
            <person name="Williamson J."/>
            <person name="Simpson A.J.G."/>
            <person name="Bulyk M.L."/>
            <person name="Harlow E."/>
            <person name="Marsischky G."/>
            <person name="Kolodner R.D."/>
            <person name="LaBaer J."/>
        </authorList>
    </citation>
    <scope>NUCLEOTIDE SEQUENCE [GENOMIC DNA]</scope>
    <source>
        <strain>ATCC 204508 / S288c</strain>
    </source>
</reference>
<reference key="5">
    <citation type="journal article" date="1994" name="Genes Dev.">
        <title>NOT1(CDC39), NOT2(CDC36), NOT3, and NOT4 encode a global-negative regulator of transcription that differentially affects TATA-element utilization.</title>
        <authorList>
            <person name="Collart M.A."/>
            <person name="Struhl K."/>
        </authorList>
    </citation>
    <scope>CHARACTERIZATION</scope>
</reference>
<reference key="6">
    <citation type="journal article" date="1998" name="EMBO J.">
        <title>The NOT proteins are part of the CCR4 transcriptional complex and affect gene expression both positively and negatively.</title>
        <authorList>
            <person name="Liu H.Y."/>
            <person name="Badarinarayana V."/>
            <person name="Audino D.C."/>
            <person name="Rappsilber J."/>
            <person name="Mann M."/>
            <person name="Denis C.L."/>
        </authorList>
    </citation>
    <scope>IDENTIFICATION IN THE CCR4-NOT CORE COMPLEX</scope>
    <scope>FUNCTION OF THE CCR4-NOT CORE COMPLEX IN TRANSCRIPTIONAL REGULATION</scope>
</reference>
<reference key="7">
    <citation type="journal article" date="2001" name="J. Mol. Biol.">
        <title>Purification and characterization of the 1.0 MDa CCR4-NOT complex identifies two novel components of the complex.</title>
        <authorList>
            <person name="Chen J."/>
            <person name="Rappsilber J."/>
            <person name="Chiang Y.C."/>
            <person name="Russell P."/>
            <person name="Mann M."/>
            <person name="Denis C.L."/>
        </authorList>
    </citation>
    <scope>IDENTIFICATION IN THE CCR4-NOT CORE COMPLEX</scope>
</reference>
<reference key="8">
    <citation type="journal article" date="2003" name="Nature">
        <title>Global analysis of protein expression in yeast.</title>
        <authorList>
            <person name="Ghaemmaghami S."/>
            <person name="Huh W.-K."/>
            <person name="Bower K."/>
            <person name="Howson R.W."/>
            <person name="Belle A."/>
            <person name="Dephoure N."/>
            <person name="O'Shea E.K."/>
            <person name="Weissman J.S."/>
        </authorList>
    </citation>
    <scope>LEVEL OF PROTEIN EXPRESSION [LARGE SCALE ANALYSIS]</scope>
</reference>
<reference key="9">
    <citation type="journal article" date="2007" name="J. Proteome Res.">
        <title>Large-scale phosphorylation analysis of alpha-factor-arrested Saccharomyces cerevisiae.</title>
        <authorList>
            <person name="Li X."/>
            <person name="Gerber S.A."/>
            <person name="Rudner A.D."/>
            <person name="Beausoleil S.A."/>
            <person name="Haas W."/>
            <person name="Villen J."/>
            <person name="Elias J.E."/>
            <person name="Gygi S.P."/>
        </authorList>
    </citation>
    <scope>PHOSPHORYLATION [LARGE SCALE ANALYSIS] AT SER-450 AND SER-657</scope>
    <scope>IDENTIFICATION BY MASS SPECTROMETRY [LARGE SCALE ANALYSIS]</scope>
    <source>
        <strain>ADR376</strain>
    </source>
</reference>
<reference key="10">
    <citation type="journal article" date="2007" name="Proc. Natl. Acad. Sci. U.S.A.">
        <title>Analysis of phosphorylation sites on proteins from Saccharomyces cerevisiae by electron transfer dissociation (ETD) mass spectrometry.</title>
        <authorList>
            <person name="Chi A."/>
            <person name="Huttenhower C."/>
            <person name="Geer L.Y."/>
            <person name="Coon J.J."/>
            <person name="Syka J.E.P."/>
            <person name="Bai D.L."/>
            <person name="Shabanowitz J."/>
            <person name="Burke D.J."/>
            <person name="Troyanskaya O.G."/>
            <person name="Hunt D.F."/>
        </authorList>
    </citation>
    <scope>PHOSPHORYLATION [LARGE SCALE ANALYSIS] AT SER-322</scope>
    <scope>IDENTIFICATION BY MASS SPECTROMETRY [LARGE SCALE ANALYSIS]</scope>
</reference>
<reference key="11">
    <citation type="journal article" date="2008" name="Mol. Cell. Proteomics">
        <title>A multidimensional chromatography technology for in-depth phosphoproteome analysis.</title>
        <authorList>
            <person name="Albuquerque C.P."/>
            <person name="Smolka M.B."/>
            <person name="Payne S.H."/>
            <person name="Bafna V."/>
            <person name="Eng J."/>
            <person name="Zhou H."/>
        </authorList>
    </citation>
    <scope>PHOSPHORYLATION [LARGE SCALE ANALYSIS] AT SER-450; SER-565 AND SER-657</scope>
    <scope>IDENTIFICATION BY MASS SPECTROMETRY [LARGE SCALE ANALYSIS]</scope>
</reference>
<reference key="12">
    <citation type="journal article" date="2009" name="Science">
        <title>Global analysis of Cdk1 substrate phosphorylation sites provides insights into evolution.</title>
        <authorList>
            <person name="Holt L.J."/>
            <person name="Tuch B.B."/>
            <person name="Villen J."/>
            <person name="Johnson A.D."/>
            <person name="Gygi S.P."/>
            <person name="Morgan D.O."/>
        </authorList>
    </citation>
    <scope>PHOSPHORYLATION [LARGE SCALE ANALYSIS] AT SER-303; SER-307; SER-446; SER-450; SER-565; SER-569 AND THR-571</scope>
    <scope>IDENTIFICATION BY MASS SPECTROMETRY [LARGE SCALE ANALYSIS]</scope>
</reference>
<reference key="13">
    <citation type="journal article" date="2012" name="Proteomics">
        <title>Sites of ubiquitin attachment in Saccharomyces cerevisiae.</title>
        <authorList>
            <person name="Starita L.M."/>
            <person name="Lo R.S."/>
            <person name="Eng J.K."/>
            <person name="von Haller P.D."/>
            <person name="Fields S."/>
        </authorList>
    </citation>
    <scope>UBIQUITINATION [LARGE SCALE ANALYSIS] AT LYS-535</scope>
    <scope>IDENTIFICATION BY MASS SPECTROMETRY [LARGE SCALE ANALYSIS]</scope>
</reference>
<sequence>MAHRKLQQEVDRVFKKINEGLEIFNSYYERHESCTNNPSQKDKLESDLKREVKKLQRLREQIKSWQSSPDIKDKDSLLDYRRSVEIAMEKYKAVEKASKEKAYSNISLKKSETLDPQERERRDISEYLSQMIDELERQYDSLQVEIDKLLLLNKKKKTSSTTNDEKKEQYKRFQARYRWHQQQMELALRLLANEELDPQDVKNVQDDINYFVESNQDPDFVEDETIYDGLNLQSNEAIAHEVAQYFASQNAEDNNTSDANESLQDISKLSKKEQRKLEREAKKAAKLAAKNATGAAIPVAGPSSTPSPVIPVADASKETERSPSSSPIHNATKPEEAVKTSIKSPRSSADNLLPSLQKSPSSATPETPTNVHTHIHQTPNGITGATTLKPATLPAKPAGELKWAVAASQAVEKDRKVTSASSTISNTSTKTPTTAAATTTSSNANSRIGSALNTPKLSTSSLSLQPDNTGASSSAATAAAVLAAGAAAVHQNNQAFYRNMSSSHHPLVSLATNPKSEHEVATTVNQNGPENTTKKVMEQKEEESPEERNKLQVPTFGVFDDDFESDRDSETEPEEEEQPSTPKYLSLEQREAKTNEIKKEFVSDFETLLLPSGVQEFIMSSELYNSQIESKITYKRSRDMCEISRLVEVPQGVNPPSPLDAFRSTQQWDVMRCSLRDIIIGSERLKEDSSSIYAKILENFRTLEMFSLFYNYYFAITPLEREIAYKILNERDWKVSKDGTMWFLRQGEVKFFNEICEVGDYKIFKLDDWTVIDKINFRLDYSFLQPPVDTASEVRDVSVDNNNVNDQSNVTLEQQKQEISHGKQLLKQLKQGKISV</sequence>
<accession>P06102</accession>
<accession>D6VVP4</accession>
<accession>Q6B233</accession>
<feature type="chain" id="PRO_0000198337" description="General negative regulator of transcription subunit 3">
    <location>
        <begin position="1"/>
        <end position="836"/>
    </location>
</feature>
<feature type="region of interest" description="Disordered" evidence="2">
    <location>
        <begin position="252"/>
        <end position="284"/>
    </location>
</feature>
<feature type="region of interest" description="Disordered" evidence="2">
    <location>
        <begin position="296"/>
        <end position="391"/>
    </location>
</feature>
<feature type="region of interest" description="Disordered" evidence="2">
    <location>
        <begin position="410"/>
        <end position="471"/>
    </location>
</feature>
<feature type="region of interest" description="Disordered" evidence="2">
    <location>
        <begin position="513"/>
        <end position="532"/>
    </location>
</feature>
<feature type="region of interest" description="Disordered" evidence="2">
    <location>
        <begin position="537"/>
        <end position="583"/>
    </location>
</feature>
<feature type="coiled-coil region" evidence="1">
    <location>
        <begin position="36"/>
        <end position="68"/>
    </location>
</feature>
<feature type="coiled-coil region" evidence="1">
    <location>
        <begin position="119"/>
        <end position="195"/>
    </location>
</feature>
<feature type="coiled-coil region" evidence="1">
    <location>
        <begin position="255"/>
        <end position="292"/>
    </location>
</feature>
<feature type="coiled-coil region" evidence="1">
    <location>
        <begin position="803"/>
        <end position="831"/>
    </location>
</feature>
<feature type="compositionally biased region" description="Polar residues" evidence="2">
    <location>
        <begin position="252"/>
        <end position="267"/>
    </location>
</feature>
<feature type="compositionally biased region" description="Basic and acidic residues" evidence="2">
    <location>
        <begin position="268"/>
        <end position="283"/>
    </location>
</feature>
<feature type="compositionally biased region" description="Polar residues" evidence="2">
    <location>
        <begin position="341"/>
        <end position="386"/>
    </location>
</feature>
<feature type="compositionally biased region" description="Low complexity" evidence="2">
    <location>
        <begin position="418"/>
        <end position="446"/>
    </location>
</feature>
<feature type="compositionally biased region" description="Polar residues" evidence="2">
    <location>
        <begin position="447"/>
        <end position="468"/>
    </location>
</feature>
<feature type="compositionally biased region" description="Polar residues" evidence="2">
    <location>
        <begin position="522"/>
        <end position="531"/>
    </location>
</feature>
<feature type="compositionally biased region" description="Acidic residues" evidence="2">
    <location>
        <begin position="559"/>
        <end position="578"/>
    </location>
</feature>
<feature type="modified residue" description="Phosphoserine" evidence="11">
    <location>
        <position position="303"/>
    </location>
</feature>
<feature type="modified residue" description="Phosphoserine" evidence="11">
    <location>
        <position position="307"/>
    </location>
</feature>
<feature type="modified residue" description="Phosphoserine" evidence="8">
    <location>
        <position position="322"/>
    </location>
</feature>
<feature type="modified residue" description="Phosphoserine" evidence="11">
    <location>
        <position position="446"/>
    </location>
</feature>
<feature type="modified residue" description="Phosphoserine" evidence="9 10 11">
    <location>
        <position position="450"/>
    </location>
</feature>
<feature type="modified residue" description="Phosphoserine" evidence="10 11">
    <location>
        <position position="565"/>
    </location>
</feature>
<feature type="modified residue" description="Phosphoserine" evidence="11">
    <location>
        <position position="569"/>
    </location>
</feature>
<feature type="modified residue" description="Phosphothreonine" evidence="11">
    <location>
        <position position="571"/>
    </location>
</feature>
<feature type="modified residue" description="Phosphoserine" evidence="9 10">
    <location>
        <position position="657"/>
    </location>
</feature>
<feature type="cross-link" description="Glycyl lysine isopeptide (Lys-Gly) (interchain with G-Cter in ubiquitin)" evidence="12">
    <location>
        <position position="535"/>
    </location>
</feature>
<feature type="sequence conflict" description="In Ref. 1; CAA86913." evidence="6" ref="1">
    <original>I</original>
    <variation>N</variation>
    <location>
        <position position="106"/>
    </location>
</feature>
<feature type="sequence conflict" description="In Ref. 4; AAT92916." evidence="6" ref="4">
    <original>K</original>
    <variation>R</variation>
    <location>
        <position position="593"/>
    </location>
</feature>
<feature type="sequence conflict" description="In Ref. 1; CAA86913." evidence="6" ref="1">
    <original>Y</original>
    <variation>C</variation>
    <location>
        <position position="725"/>
    </location>
</feature>
<feature type="sequence conflict" description="In Ref. 1; CAA86913." evidence="6" ref="1">
    <original>KQLKQGKISV</original>
    <variation>ETIETGKN</variation>
    <location>
        <begin position="827"/>
        <end position="836"/>
    </location>
</feature>
<dbReference type="EMBL" id="Z46861">
    <property type="protein sequence ID" value="CAA86913.1"/>
    <property type="molecule type" value="Genomic_DNA"/>
</dbReference>
<dbReference type="EMBL" id="X04289">
    <property type="protein sequence ID" value="CAA27837.1"/>
    <property type="molecule type" value="Genomic_DNA"/>
</dbReference>
<dbReference type="EMBL" id="AY692897">
    <property type="protein sequence ID" value="AAT92916.1"/>
    <property type="molecule type" value="Genomic_DNA"/>
</dbReference>
<dbReference type="EMBL" id="BK006942">
    <property type="protein sequence ID" value="DAA08510.1"/>
    <property type="molecule type" value="Genomic_DNA"/>
</dbReference>
<dbReference type="PIR" id="S49940">
    <property type="entry name" value="S49940"/>
</dbReference>
<dbReference type="RefSeq" id="NP_012226.3">
    <property type="nucleotide sequence ID" value="NM_001179388.3"/>
</dbReference>
<dbReference type="SMR" id="P06102"/>
<dbReference type="BioGRID" id="34952">
    <property type="interactions" value="269"/>
</dbReference>
<dbReference type="ComplexPortal" id="CPX-1800">
    <property type="entry name" value="CCR4-NOT mRNA deadenylase complex"/>
</dbReference>
<dbReference type="DIP" id="DIP-2256N"/>
<dbReference type="FunCoup" id="P06102">
    <property type="interactions" value="503"/>
</dbReference>
<dbReference type="IntAct" id="P06102">
    <property type="interactions" value="45"/>
</dbReference>
<dbReference type="MINT" id="P06102"/>
<dbReference type="STRING" id="4932.YIL038C"/>
<dbReference type="GlyGen" id="P06102">
    <property type="glycosylation" value="7 sites, 1 O-linked glycan (5 sites)"/>
</dbReference>
<dbReference type="iPTMnet" id="P06102"/>
<dbReference type="PaxDb" id="4932-YIL038C"/>
<dbReference type="PeptideAtlas" id="P06102"/>
<dbReference type="TopDownProteomics" id="P06102"/>
<dbReference type="EnsemblFungi" id="YIL038C_mRNA">
    <property type="protein sequence ID" value="YIL038C"/>
    <property type="gene ID" value="YIL038C"/>
</dbReference>
<dbReference type="GeneID" id="854773"/>
<dbReference type="KEGG" id="sce:YIL038C"/>
<dbReference type="AGR" id="SGD:S000001300"/>
<dbReference type="SGD" id="S000001300">
    <property type="gene designation" value="NOT3"/>
</dbReference>
<dbReference type="VEuPathDB" id="FungiDB:YIL038C"/>
<dbReference type="eggNOG" id="KOG2150">
    <property type="taxonomic scope" value="Eukaryota"/>
</dbReference>
<dbReference type="HOGENOM" id="CLU_020483_0_0_1"/>
<dbReference type="InParanoid" id="P06102"/>
<dbReference type="OMA" id="YKPQTPY"/>
<dbReference type="OrthoDB" id="293823at2759"/>
<dbReference type="BioCyc" id="YEAST:G3O-31310-MONOMER"/>
<dbReference type="BioGRID-ORCS" id="854773">
    <property type="hits" value="0 hits in 10 CRISPR screens"/>
</dbReference>
<dbReference type="CD-CODE" id="A777E0F8">
    <property type="entry name" value="P-body"/>
</dbReference>
<dbReference type="PRO" id="PR:P06102"/>
<dbReference type="Proteomes" id="UP000002311">
    <property type="component" value="Chromosome IX"/>
</dbReference>
<dbReference type="RNAct" id="P06102">
    <property type="molecule type" value="protein"/>
</dbReference>
<dbReference type="GO" id="GO:0030015">
    <property type="term" value="C:CCR4-NOT core complex"/>
    <property type="evidence" value="ECO:0000353"/>
    <property type="project" value="SGD"/>
</dbReference>
<dbReference type="GO" id="GO:0005737">
    <property type="term" value="C:cytoplasm"/>
    <property type="evidence" value="ECO:0000314"/>
    <property type="project" value="SGD"/>
</dbReference>
<dbReference type="GO" id="GO:0005634">
    <property type="term" value="C:nucleus"/>
    <property type="evidence" value="ECO:0007669"/>
    <property type="project" value="UniProtKB-SubCell"/>
</dbReference>
<dbReference type="GO" id="GO:0000932">
    <property type="term" value="C:P-body"/>
    <property type="evidence" value="ECO:0000318"/>
    <property type="project" value="GO_Central"/>
</dbReference>
<dbReference type="GO" id="GO:0000290">
    <property type="term" value="P:deadenylation-dependent decapping of nuclear-transcribed mRNA"/>
    <property type="evidence" value="ECO:0000315"/>
    <property type="project" value="SGD"/>
</dbReference>
<dbReference type="GO" id="GO:0000289">
    <property type="term" value="P:nuclear-transcribed mRNA poly(A) tail shortening"/>
    <property type="evidence" value="ECO:0000314"/>
    <property type="project" value="SGD"/>
</dbReference>
<dbReference type="GO" id="GO:0032968">
    <property type="term" value="P:positive regulation of transcription elongation by RNA polymerase II"/>
    <property type="evidence" value="ECO:0000314"/>
    <property type="project" value="ComplexPortal"/>
</dbReference>
<dbReference type="GO" id="GO:0016567">
    <property type="term" value="P:protein ubiquitination"/>
    <property type="evidence" value="ECO:0000315"/>
    <property type="project" value="SGD"/>
</dbReference>
<dbReference type="FunFam" id="2.30.30.1020:FF:000013">
    <property type="entry name" value="CCR4-NOT transcriptional complex subunit"/>
    <property type="match status" value="1"/>
</dbReference>
<dbReference type="Gene3D" id="2.30.30.1020">
    <property type="entry name" value="CCR4-NOT complex subunit 2/3/5, C-terminal domain"/>
    <property type="match status" value="1"/>
</dbReference>
<dbReference type="InterPro" id="IPR038635">
    <property type="entry name" value="CCR4-NOT_su2/3/5_C_sf"/>
</dbReference>
<dbReference type="InterPro" id="IPR012270">
    <property type="entry name" value="CCR4-NOT_su3/5"/>
</dbReference>
<dbReference type="InterPro" id="IPR040168">
    <property type="entry name" value="Not2/3/5"/>
</dbReference>
<dbReference type="InterPro" id="IPR007282">
    <property type="entry name" value="NOT2/3/5_C"/>
</dbReference>
<dbReference type="InterPro" id="IPR007207">
    <property type="entry name" value="Not_N"/>
</dbReference>
<dbReference type="PANTHER" id="PTHR23326">
    <property type="entry name" value="CCR4 NOT-RELATED"/>
    <property type="match status" value="1"/>
</dbReference>
<dbReference type="Pfam" id="PF04153">
    <property type="entry name" value="NOT2_3_5_C"/>
    <property type="match status" value="1"/>
</dbReference>
<dbReference type="Pfam" id="PF04065">
    <property type="entry name" value="Not3"/>
    <property type="match status" value="1"/>
</dbReference>
<dbReference type="PIRSF" id="PIRSF005290">
    <property type="entry name" value="NOT_su_3_5"/>
    <property type="match status" value="1"/>
</dbReference>